<accession>A5WDN1</accession>
<reference key="1">
    <citation type="submission" date="2007-05" db="EMBL/GenBank/DDBJ databases">
        <title>Complete sequence of chromosome of Psychrobacter sp. PRwf-1.</title>
        <authorList>
            <consortium name="US DOE Joint Genome Institute"/>
            <person name="Copeland A."/>
            <person name="Lucas S."/>
            <person name="Lapidus A."/>
            <person name="Barry K."/>
            <person name="Detter J.C."/>
            <person name="Glavina del Rio T."/>
            <person name="Hammon N."/>
            <person name="Israni S."/>
            <person name="Dalin E."/>
            <person name="Tice H."/>
            <person name="Pitluck S."/>
            <person name="Chain P."/>
            <person name="Malfatti S."/>
            <person name="Shin M."/>
            <person name="Vergez L."/>
            <person name="Schmutz J."/>
            <person name="Larimer F."/>
            <person name="Land M."/>
            <person name="Hauser L."/>
            <person name="Kyrpides N."/>
            <person name="Kim E."/>
            <person name="Tiedje J."/>
            <person name="Richardson P."/>
        </authorList>
    </citation>
    <scope>NUCLEOTIDE SEQUENCE [LARGE SCALE GENOMIC DNA]</scope>
    <source>
        <strain>PRwf-1</strain>
    </source>
</reference>
<protein>
    <recommendedName>
        <fullName evidence="1">tRNA dimethylallyltransferase</fullName>
        <ecNumber evidence="1">2.5.1.75</ecNumber>
    </recommendedName>
    <alternativeName>
        <fullName evidence="1">Dimethylallyl diphosphate:tRNA dimethylallyltransferase</fullName>
        <shortName evidence="1">DMAPP:tRNA dimethylallyltransferase</shortName>
        <shortName evidence="1">DMATase</shortName>
    </alternativeName>
    <alternativeName>
        <fullName evidence="1">Isopentenyl-diphosphate:tRNA isopentenyltransferase</fullName>
        <shortName evidence="1">IPP transferase</shortName>
        <shortName evidence="1">IPPT</shortName>
        <shortName evidence="1">IPTase</shortName>
    </alternativeName>
</protein>
<comment type="function">
    <text evidence="1">Catalyzes the transfer of a dimethylallyl group onto the adenine at position 37 in tRNAs that read codons beginning with uridine, leading to the formation of N6-(dimethylallyl)adenosine (i(6)A).</text>
</comment>
<comment type="catalytic activity">
    <reaction evidence="1">
        <text>adenosine(37) in tRNA + dimethylallyl diphosphate = N(6)-dimethylallyladenosine(37) in tRNA + diphosphate</text>
        <dbReference type="Rhea" id="RHEA:26482"/>
        <dbReference type="Rhea" id="RHEA-COMP:10162"/>
        <dbReference type="Rhea" id="RHEA-COMP:10375"/>
        <dbReference type="ChEBI" id="CHEBI:33019"/>
        <dbReference type="ChEBI" id="CHEBI:57623"/>
        <dbReference type="ChEBI" id="CHEBI:74411"/>
        <dbReference type="ChEBI" id="CHEBI:74415"/>
        <dbReference type="EC" id="2.5.1.75"/>
    </reaction>
</comment>
<comment type="cofactor">
    <cofactor evidence="1">
        <name>Mg(2+)</name>
        <dbReference type="ChEBI" id="CHEBI:18420"/>
    </cofactor>
</comment>
<comment type="subunit">
    <text evidence="1">Monomer.</text>
</comment>
<comment type="similarity">
    <text evidence="1">Belongs to the IPP transferase family.</text>
</comment>
<proteinExistence type="inferred from homology"/>
<keyword id="KW-0067">ATP-binding</keyword>
<keyword id="KW-0460">Magnesium</keyword>
<keyword id="KW-0547">Nucleotide-binding</keyword>
<keyword id="KW-0808">Transferase</keyword>
<keyword id="KW-0819">tRNA processing</keyword>
<sequence length="365" mass="41215">MGDVDNLSLPTKLPDNAVVCLMAPTASGKTSLAYELYETGRFEIISVDSALIYKDMNIGTAKPTQSELEQYPHHLVDIIDPTQSYSVANFVSDTQQLVEQIHQRGKTPLLVGGTLMYYMALFNGLSPIPDTDPNVRAQVEAQRQQQGIEALHDYLSKIDPPLAERLPIGDTQRITRAIEVYQQTGKPLSYWQQLPKQALSDNPQQYWLGLAVMPDRAWLHERIALRLEMMWADGFFDEVGQLLTNYSLDAQMPSMRCVGYRQVIDYLIATDHPLISRLKINGQSVDNKGLEVNEAHKSIACQDMKNKALYATRQLAKRQYTWLRNLVASHQPSDTLQTSGAQTEQKVVHSFDTIQDAKAYLFSRL</sequence>
<dbReference type="EC" id="2.5.1.75" evidence="1"/>
<dbReference type="EMBL" id="CP000713">
    <property type="protein sequence ID" value="ABQ93772.1"/>
    <property type="molecule type" value="Genomic_DNA"/>
</dbReference>
<dbReference type="SMR" id="A5WDN1"/>
<dbReference type="STRING" id="349106.PsycPRwf_0820"/>
<dbReference type="KEGG" id="prw:PsycPRwf_0820"/>
<dbReference type="eggNOG" id="COG0324">
    <property type="taxonomic scope" value="Bacteria"/>
</dbReference>
<dbReference type="HOGENOM" id="CLU_032616_0_0_6"/>
<dbReference type="GO" id="GO:0005524">
    <property type="term" value="F:ATP binding"/>
    <property type="evidence" value="ECO:0007669"/>
    <property type="project" value="UniProtKB-UniRule"/>
</dbReference>
<dbReference type="GO" id="GO:0052381">
    <property type="term" value="F:tRNA dimethylallyltransferase activity"/>
    <property type="evidence" value="ECO:0007669"/>
    <property type="project" value="UniProtKB-UniRule"/>
</dbReference>
<dbReference type="GO" id="GO:0006400">
    <property type="term" value="P:tRNA modification"/>
    <property type="evidence" value="ECO:0007669"/>
    <property type="project" value="TreeGrafter"/>
</dbReference>
<dbReference type="FunFam" id="1.10.20.140:FF:000001">
    <property type="entry name" value="tRNA dimethylallyltransferase"/>
    <property type="match status" value="1"/>
</dbReference>
<dbReference type="Gene3D" id="1.10.20.140">
    <property type="match status" value="1"/>
</dbReference>
<dbReference type="Gene3D" id="3.40.50.300">
    <property type="entry name" value="P-loop containing nucleotide triphosphate hydrolases"/>
    <property type="match status" value="1"/>
</dbReference>
<dbReference type="HAMAP" id="MF_00185">
    <property type="entry name" value="IPP_trans"/>
    <property type="match status" value="1"/>
</dbReference>
<dbReference type="InterPro" id="IPR039657">
    <property type="entry name" value="Dimethylallyltransferase"/>
</dbReference>
<dbReference type="InterPro" id="IPR018022">
    <property type="entry name" value="IPT"/>
</dbReference>
<dbReference type="InterPro" id="IPR027417">
    <property type="entry name" value="P-loop_NTPase"/>
</dbReference>
<dbReference type="NCBIfam" id="TIGR00174">
    <property type="entry name" value="miaA"/>
    <property type="match status" value="1"/>
</dbReference>
<dbReference type="PANTHER" id="PTHR11088">
    <property type="entry name" value="TRNA DIMETHYLALLYLTRANSFERASE"/>
    <property type="match status" value="1"/>
</dbReference>
<dbReference type="PANTHER" id="PTHR11088:SF60">
    <property type="entry name" value="TRNA DIMETHYLALLYLTRANSFERASE"/>
    <property type="match status" value="1"/>
</dbReference>
<dbReference type="Pfam" id="PF01715">
    <property type="entry name" value="IPPT"/>
    <property type="match status" value="1"/>
</dbReference>
<dbReference type="SUPFAM" id="SSF52540">
    <property type="entry name" value="P-loop containing nucleoside triphosphate hydrolases"/>
    <property type="match status" value="1"/>
</dbReference>
<organism>
    <name type="scientific">Psychrobacter sp. (strain PRwf-1)</name>
    <dbReference type="NCBI Taxonomy" id="349106"/>
    <lineage>
        <taxon>Bacteria</taxon>
        <taxon>Pseudomonadati</taxon>
        <taxon>Pseudomonadota</taxon>
        <taxon>Gammaproteobacteria</taxon>
        <taxon>Moraxellales</taxon>
        <taxon>Moraxellaceae</taxon>
        <taxon>Psychrobacter</taxon>
    </lineage>
</organism>
<gene>
    <name evidence="1" type="primary">miaA</name>
    <name type="ordered locus">PsycPRwf_0820</name>
</gene>
<name>MIAA_PSYWF</name>
<feature type="chain" id="PRO_0000377275" description="tRNA dimethylallyltransferase">
    <location>
        <begin position="1"/>
        <end position="365"/>
    </location>
</feature>
<feature type="region of interest" description="Interaction with substrate tRNA" evidence="1">
    <location>
        <begin position="48"/>
        <end position="51"/>
    </location>
</feature>
<feature type="region of interest" description="Interaction with substrate tRNA" evidence="1">
    <location>
        <begin position="172"/>
        <end position="176"/>
    </location>
</feature>
<feature type="region of interest" description="Interaction with substrate tRNA" evidence="1">
    <location>
        <begin position="256"/>
        <end position="261"/>
    </location>
</feature>
<feature type="binding site" evidence="1">
    <location>
        <begin position="23"/>
        <end position="30"/>
    </location>
    <ligand>
        <name>ATP</name>
        <dbReference type="ChEBI" id="CHEBI:30616"/>
    </ligand>
</feature>
<feature type="binding site" evidence="1">
    <location>
        <begin position="25"/>
        <end position="30"/>
    </location>
    <ligand>
        <name>substrate</name>
    </ligand>
</feature>
<feature type="site" description="Interaction with substrate tRNA" evidence="1">
    <location>
        <position position="114"/>
    </location>
</feature>
<feature type="site" description="Interaction with substrate tRNA" evidence="1">
    <location>
        <position position="136"/>
    </location>
</feature>
<evidence type="ECO:0000255" key="1">
    <source>
        <dbReference type="HAMAP-Rule" id="MF_00185"/>
    </source>
</evidence>